<gene>
    <name evidence="2" type="primary">tuf2</name>
    <name type="ordered locus">EcolC_4045</name>
</gene>
<proteinExistence type="inferred from homology"/>
<organism>
    <name type="scientific">Escherichia coli (strain ATCC 8739 / DSM 1576 / NBRC 3972 / NCIMB 8545 / WDCM 00012 / Crooks)</name>
    <dbReference type="NCBI Taxonomy" id="481805"/>
    <lineage>
        <taxon>Bacteria</taxon>
        <taxon>Pseudomonadati</taxon>
        <taxon>Pseudomonadota</taxon>
        <taxon>Gammaproteobacteria</taxon>
        <taxon>Enterobacterales</taxon>
        <taxon>Enterobacteriaceae</taxon>
        <taxon>Escherichia</taxon>
    </lineage>
</organism>
<dbReference type="EC" id="3.6.5.3" evidence="2"/>
<dbReference type="EMBL" id="CP000946">
    <property type="protein sequence ID" value="ACA79644.1"/>
    <property type="molecule type" value="Genomic_DNA"/>
</dbReference>
<dbReference type="SMR" id="B1IVA7"/>
<dbReference type="KEGG" id="ecl:EcolC_4045"/>
<dbReference type="HOGENOM" id="CLU_007265_0_2_6"/>
<dbReference type="GO" id="GO:0005829">
    <property type="term" value="C:cytosol"/>
    <property type="evidence" value="ECO:0007669"/>
    <property type="project" value="TreeGrafter"/>
</dbReference>
<dbReference type="GO" id="GO:0005525">
    <property type="term" value="F:GTP binding"/>
    <property type="evidence" value="ECO:0007669"/>
    <property type="project" value="UniProtKB-UniRule"/>
</dbReference>
<dbReference type="GO" id="GO:0003924">
    <property type="term" value="F:GTPase activity"/>
    <property type="evidence" value="ECO:0007669"/>
    <property type="project" value="InterPro"/>
</dbReference>
<dbReference type="GO" id="GO:0097216">
    <property type="term" value="F:guanosine tetraphosphate binding"/>
    <property type="evidence" value="ECO:0007669"/>
    <property type="project" value="UniProtKB-ARBA"/>
</dbReference>
<dbReference type="GO" id="GO:0003746">
    <property type="term" value="F:translation elongation factor activity"/>
    <property type="evidence" value="ECO:0007669"/>
    <property type="project" value="UniProtKB-UniRule"/>
</dbReference>
<dbReference type="CDD" id="cd01884">
    <property type="entry name" value="EF_Tu"/>
    <property type="match status" value="1"/>
</dbReference>
<dbReference type="CDD" id="cd03697">
    <property type="entry name" value="EFTU_II"/>
    <property type="match status" value="1"/>
</dbReference>
<dbReference type="CDD" id="cd03707">
    <property type="entry name" value="EFTU_III"/>
    <property type="match status" value="1"/>
</dbReference>
<dbReference type="FunFam" id="2.40.30.10:FF:000001">
    <property type="entry name" value="Elongation factor Tu"/>
    <property type="match status" value="1"/>
</dbReference>
<dbReference type="FunFam" id="3.40.50.300:FF:000003">
    <property type="entry name" value="Elongation factor Tu"/>
    <property type="match status" value="1"/>
</dbReference>
<dbReference type="Gene3D" id="3.40.50.300">
    <property type="entry name" value="P-loop containing nucleotide triphosphate hydrolases"/>
    <property type="match status" value="1"/>
</dbReference>
<dbReference type="Gene3D" id="2.40.30.10">
    <property type="entry name" value="Translation factors"/>
    <property type="match status" value="2"/>
</dbReference>
<dbReference type="HAMAP" id="MF_00118_B">
    <property type="entry name" value="EF_Tu_B"/>
    <property type="match status" value="1"/>
</dbReference>
<dbReference type="InterPro" id="IPR041709">
    <property type="entry name" value="EF-Tu_GTP-bd"/>
</dbReference>
<dbReference type="InterPro" id="IPR050055">
    <property type="entry name" value="EF-Tu_GTPase"/>
</dbReference>
<dbReference type="InterPro" id="IPR004161">
    <property type="entry name" value="EFTu-like_2"/>
</dbReference>
<dbReference type="InterPro" id="IPR033720">
    <property type="entry name" value="EFTU_2"/>
</dbReference>
<dbReference type="InterPro" id="IPR031157">
    <property type="entry name" value="G_TR_CS"/>
</dbReference>
<dbReference type="InterPro" id="IPR027417">
    <property type="entry name" value="P-loop_NTPase"/>
</dbReference>
<dbReference type="InterPro" id="IPR005225">
    <property type="entry name" value="Small_GTP-bd"/>
</dbReference>
<dbReference type="InterPro" id="IPR000795">
    <property type="entry name" value="T_Tr_GTP-bd_dom"/>
</dbReference>
<dbReference type="InterPro" id="IPR009000">
    <property type="entry name" value="Transl_B-barrel_sf"/>
</dbReference>
<dbReference type="InterPro" id="IPR009001">
    <property type="entry name" value="Transl_elong_EF1A/Init_IF2_C"/>
</dbReference>
<dbReference type="InterPro" id="IPR004541">
    <property type="entry name" value="Transl_elong_EFTu/EF1A_bac/org"/>
</dbReference>
<dbReference type="InterPro" id="IPR004160">
    <property type="entry name" value="Transl_elong_EFTu/EF1A_C"/>
</dbReference>
<dbReference type="NCBIfam" id="TIGR00485">
    <property type="entry name" value="EF-Tu"/>
    <property type="match status" value="1"/>
</dbReference>
<dbReference type="NCBIfam" id="NF000766">
    <property type="entry name" value="PRK00049.1"/>
    <property type="match status" value="1"/>
</dbReference>
<dbReference type="NCBIfam" id="NF009372">
    <property type="entry name" value="PRK12735.1"/>
    <property type="match status" value="1"/>
</dbReference>
<dbReference type="NCBIfam" id="NF009373">
    <property type="entry name" value="PRK12736.1"/>
    <property type="match status" value="1"/>
</dbReference>
<dbReference type="NCBIfam" id="TIGR00231">
    <property type="entry name" value="small_GTP"/>
    <property type="match status" value="1"/>
</dbReference>
<dbReference type="PANTHER" id="PTHR43721:SF22">
    <property type="entry name" value="ELONGATION FACTOR TU, MITOCHONDRIAL"/>
    <property type="match status" value="1"/>
</dbReference>
<dbReference type="PANTHER" id="PTHR43721">
    <property type="entry name" value="ELONGATION FACTOR TU-RELATED"/>
    <property type="match status" value="1"/>
</dbReference>
<dbReference type="Pfam" id="PF00009">
    <property type="entry name" value="GTP_EFTU"/>
    <property type="match status" value="1"/>
</dbReference>
<dbReference type="Pfam" id="PF03144">
    <property type="entry name" value="GTP_EFTU_D2"/>
    <property type="match status" value="1"/>
</dbReference>
<dbReference type="Pfam" id="PF03143">
    <property type="entry name" value="GTP_EFTU_D3"/>
    <property type="match status" value="1"/>
</dbReference>
<dbReference type="PRINTS" id="PR00315">
    <property type="entry name" value="ELONGATNFCT"/>
</dbReference>
<dbReference type="SUPFAM" id="SSF50465">
    <property type="entry name" value="EF-Tu/eEF-1alpha/eIF2-gamma C-terminal domain"/>
    <property type="match status" value="1"/>
</dbReference>
<dbReference type="SUPFAM" id="SSF52540">
    <property type="entry name" value="P-loop containing nucleoside triphosphate hydrolases"/>
    <property type="match status" value="1"/>
</dbReference>
<dbReference type="SUPFAM" id="SSF50447">
    <property type="entry name" value="Translation proteins"/>
    <property type="match status" value="1"/>
</dbReference>
<dbReference type="PROSITE" id="PS00301">
    <property type="entry name" value="G_TR_1"/>
    <property type="match status" value="1"/>
</dbReference>
<dbReference type="PROSITE" id="PS51722">
    <property type="entry name" value="G_TR_2"/>
    <property type="match status" value="1"/>
</dbReference>
<keyword id="KW-0963">Cytoplasm</keyword>
<keyword id="KW-0251">Elongation factor</keyword>
<keyword id="KW-0342">GTP-binding</keyword>
<keyword id="KW-0378">Hydrolase</keyword>
<keyword id="KW-0460">Magnesium</keyword>
<keyword id="KW-0479">Metal-binding</keyword>
<keyword id="KW-0547">Nucleotide-binding</keyword>
<keyword id="KW-0648">Protein biosynthesis</keyword>
<protein>
    <recommendedName>
        <fullName evidence="2">Elongation factor Tu 2</fullName>
        <shortName evidence="2">EF-Tu 2</shortName>
        <ecNumber evidence="2">3.6.5.3</ecNumber>
    </recommendedName>
</protein>
<comment type="function">
    <text evidence="2">GTP hydrolase that promotes the GTP-dependent binding of aminoacyl-tRNA to the A-site of ribosomes during protein biosynthesis.</text>
</comment>
<comment type="catalytic activity">
    <reaction evidence="2">
        <text>GTP + H2O = GDP + phosphate + H(+)</text>
        <dbReference type="Rhea" id="RHEA:19669"/>
        <dbReference type="ChEBI" id="CHEBI:15377"/>
        <dbReference type="ChEBI" id="CHEBI:15378"/>
        <dbReference type="ChEBI" id="CHEBI:37565"/>
        <dbReference type="ChEBI" id="CHEBI:43474"/>
        <dbReference type="ChEBI" id="CHEBI:58189"/>
        <dbReference type="EC" id="3.6.5.3"/>
    </reaction>
    <physiologicalReaction direction="left-to-right" evidence="2">
        <dbReference type="Rhea" id="RHEA:19670"/>
    </physiologicalReaction>
</comment>
<comment type="subunit">
    <text evidence="2">Monomer.</text>
</comment>
<comment type="subcellular location">
    <subcellularLocation>
        <location evidence="2">Cytoplasm</location>
    </subcellularLocation>
</comment>
<comment type="similarity">
    <text evidence="2">Belongs to the TRAFAC class translation factor GTPase superfamily. Classic translation factor GTPase family. EF-Tu/EF-1A subfamily.</text>
</comment>
<sequence length="394" mass="43314">MSKEKFERTKPHVNVGTIGHVDHGKTTLTAAITTVLAKTYGGAARAFDQIDNAPEEKARGITINTSHVEYDTPTRHYAHVDCPGHADYVKNMITGAAQMDGAILVVAATDGPMPQTREHILLGRQVGVPYIIVFLNKCDMVDDEELLELVEMEVRELLSQYDFPGDDTPIVRGSALKALEGDAEWEAKILELAGFLDSYIPEPERAIDKPFLLPIEDVFSISGRGTVVTGRVERGIIKVGEEVEIVGIKETQKSTCTGVEMFRKLLDEGRAGENVGVLLRGIKREEIERGQVLAKPGTIKPHTKFESEVYILSKDEGGRHTPFFKGYRPQFYFRTTDVTGTIELPEGVEMVMPGDNIKMVVTLIHPIAMDDGLRFAIREGGRTVGAGVVAKVLS</sequence>
<evidence type="ECO:0000250" key="1"/>
<evidence type="ECO:0000255" key="2">
    <source>
        <dbReference type="HAMAP-Rule" id="MF_00118"/>
    </source>
</evidence>
<reference key="1">
    <citation type="submission" date="2008-02" db="EMBL/GenBank/DDBJ databases">
        <title>Complete sequence of Escherichia coli C str. ATCC 8739.</title>
        <authorList>
            <person name="Copeland A."/>
            <person name="Lucas S."/>
            <person name="Lapidus A."/>
            <person name="Glavina del Rio T."/>
            <person name="Dalin E."/>
            <person name="Tice H."/>
            <person name="Bruce D."/>
            <person name="Goodwin L."/>
            <person name="Pitluck S."/>
            <person name="Kiss H."/>
            <person name="Brettin T."/>
            <person name="Detter J.C."/>
            <person name="Han C."/>
            <person name="Kuske C.R."/>
            <person name="Schmutz J."/>
            <person name="Larimer F."/>
            <person name="Land M."/>
            <person name="Hauser L."/>
            <person name="Kyrpides N."/>
            <person name="Mikhailova N."/>
            <person name="Ingram L."/>
            <person name="Richardson P."/>
        </authorList>
    </citation>
    <scope>NUCLEOTIDE SEQUENCE [LARGE SCALE GENOMIC DNA]</scope>
    <source>
        <strain>ATCC 8739 / DSM 1576 / NBRC 3972 / NCIMB 8545 / WDCM 00012 / Crooks</strain>
    </source>
</reference>
<feature type="chain" id="PRO_0000337383" description="Elongation factor Tu 2">
    <location>
        <begin position="1"/>
        <end position="394"/>
    </location>
</feature>
<feature type="domain" description="tr-type G">
    <location>
        <begin position="10"/>
        <end position="204"/>
    </location>
</feature>
<feature type="region of interest" description="G1" evidence="1">
    <location>
        <begin position="19"/>
        <end position="26"/>
    </location>
</feature>
<feature type="region of interest" description="G2" evidence="1">
    <location>
        <begin position="60"/>
        <end position="64"/>
    </location>
</feature>
<feature type="region of interest" description="G3" evidence="1">
    <location>
        <begin position="81"/>
        <end position="84"/>
    </location>
</feature>
<feature type="region of interest" description="G4" evidence="1">
    <location>
        <begin position="136"/>
        <end position="139"/>
    </location>
</feature>
<feature type="region of interest" description="G5" evidence="1">
    <location>
        <begin position="174"/>
        <end position="176"/>
    </location>
</feature>
<feature type="binding site" evidence="2">
    <location>
        <begin position="19"/>
        <end position="26"/>
    </location>
    <ligand>
        <name>GTP</name>
        <dbReference type="ChEBI" id="CHEBI:37565"/>
    </ligand>
</feature>
<feature type="binding site" evidence="2">
    <location>
        <position position="26"/>
    </location>
    <ligand>
        <name>Mg(2+)</name>
        <dbReference type="ChEBI" id="CHEBI:18420"/>
    </ligand>
</feature>
<feature type="binding site" evidence="2">
    <location>
        <begin position="81"/>
        <end position="85"/>
    </location>
    <ligand>
        <name>GTP</name>
        <dbReference type="ChEBI" id="CHEBI:37565"/>
    </ligand>
</feature>
<feature type="binding site" evidence="2">
    <location>
        <begin position="136"/>
        <end position="139"/>
    </location>
    <ligand>
        <name>GTP</name>
        <dbReference type="ChEBI" id="CHEBI:37565"/>
    </ligand>
</feature>
<accession>B1IVA7</accession>
<name>EFTU2_ECOLC</name>